<proteinExistence type="evidence at protein level"/>
<accession>Q55215</accession>
<name>DNRD_STRS5</name>
<protein>
    <recommendedName>
        <fullName>Aklanonic acid methyl ester cyclase DauD</fullName>
        <shortName>AAME cyclase</shortName>
        <ecNumber>5.5.1.23</ecNumber>
    </recommendedName>
    <alternativeName>
        <fullName>Methyl aklanonate cyclase</fullName>
    </alternativeName>
</protein>
<evidence type="ECO:0000250" key="1"/>
<evidence type="ECO:0000256" key="2">
    <source>
        <dbReference type="SAM" id="MobiDB-lite"/>
    </source>
</evidence>
<evidence type="ECO:0000269" key="3">
    <source>
    </source>
</evidence>
<evidence type="ECO:0000269" key="4">
    <source ref="2"/>
</evidence>
<evidence type="ECO:0000269" key="5">
    <source ref="3"/>
</evidence>
<evidence type="ECO:0000305" key="6"/>
<gene>
    <name type="primary">dauD</name>
</gene>
<reference key="1">
    <citation type="journal article" date="1995" name="J. Bacteriol.">
        <title>Analysis of clustered genes encoding both early and late steps in daunomycin biosynthesis by Streptomyces sp. strain C5.</title>
        <authorList>
            <person name="Dickens M.L."/>
            <person name="Ye J."/>
            <person name="Strohl W.R."/>
        </authorList>
    </citation>
    <scope>NUCLEOTIDE SEQUENCE [GENOMIC DNA]</scope>
    <scope>FUNCTION</scope>
    <scope>CATALYTIC ACTIVITY</scope>
    <scope>BIOPHYSICOCHEMICAL PROPERTIES</scope>
    <source>
        <strain>C5</strain>
    </source>
</reference>
<reference key="2">
    <citation type="journal article" date="1990" name="J. Gen. Microbiol.">
        <title>Biosynthesis of anthracyclines: analysis of mutants of Streptomyces sp. strain C5 blocked in daunomycin biosynthesis.</title>
        <authorList>
            <person name="Bartel P.L."/>
            <person name="Connors N.C."/>
            <person name="William R.S."/>
        </authorList>
    </citation>
    <scope>FUNCTION</scope>
    <scope>DISRUPTION PHENOTYPE</scope>
    <source>
        <strain>C5</strain>
    </source>
</reference>
<reference key="3">
    <citation type="journal article" date="1990" name="J. Gen. Microbiol.">
        <title>Biosynthesis of anthracyclines: enzymic conversion of aklanonic acid to aklavinone and epsilon-rhodomycinone by anthracycline-producing streptomycetes.</title>
        <authorList>
            <person name="Connors N.C."/>
            <person name="Bartel P.L."/>
            <person name="William R.S."/>
        </authorList>
    </citation>
    <scope>FUNCTION</scope>
    <scope>DISRUPTION PHENOTYPE</scope>
    <source>
        <strain>C5</strain>
    </source>
</reference>
<comment type="function">
    <text evidence="3 4 5">Involved in the biosynthesis of aklavinone which is an important precursor common to the formation of the clinically significant anthracyclines such as carminomycin, daunorubicin (daunomycin), rhodomycin, aclacinomycin T (aklavin) and aclacinomycin A (aclarubicin). These compounds are aromatic polyketide antibiotics that exhibit high cytotoxicity and are widely applied in the chemotherapy of a variety of cancers. Catalyzes the cyclization of aklanonic acid methyl ester to yield aklaviketone.</text>
</comment>
<comment type="catalytic activity">
    <reaction evidence="3">
        <text>methyl aklanonate = aklaviketone</text>
        <dbReference type="Rhea" id="RHEA:37879"/>
        <dbReference type="ChEBI" id="CHEBI:77988"/>
        <dbReference type="ChEBI" id="CHEBI:77994"/>
        <dbReference type="EC" id="5.5.1.23"/>
    </reaction>
</comment>
<comment type="biophysicochemical properties">
    <phDependence>
        <text evidence="3">Optimum pH is between 6 and 7.5.</text>
    </phDependence>
</comment>
<comment type="pathway">
    <text>Antibiotic biosynthesis; daunorubicin biosynthesis.</text>
</comment>
<comment type="pathway">
    <text>Antibiotic biosynthesis; carminomycin biosynthesis.</text>
</comment>
<comment type="pathway">
    <text>Antibiotic biosynthesis; rhodomycin biosynthesis.</text>
</comment>
<comment type="pathway">
    <text>Antibiotic biosynthesis; aclacinomycin biosynthesis.</text>
</comment>
<comment type="subunit">
    <text evidence="1">Homotetramer.</text>
</comment>
<comment type="disruption phenotype">
    <text evidence="4 5">Cells lacking this gene accumulate aklanonic acid methyl ester.</text>
</comment>
<comment type="similarity">
    <text evidence="6">Belongs to the polyketide cyclase DnrD family.</text>
</comment>
<keyword id="KW-0045">Antibiotic biosynthesis</keyword>
<keyword id="KW-0413">Isomerase</keyword>
<sequence length="161" mass="18495">MSPQIDLVRRMVEAYNTGKTDDVAEFILHEYLNPGALEHNPELRGPEAFAAAVTWLKYAFSEEAHLEEIGYEENGPWVRAKLALYGRHVGNLVGMPATGRRFSGEQIHLIRIVDGKIRDHRDWPDYLGTYRQLGEPWPTPEGWRPCPPPPRRRHDRSTDTP</sequence>
<organism>
    <name type="scientific">Streptomyces sp. (strain C5)</name>
    <dbReference type="NCBI Taxonomy" id="45212"/>
    <lineage>
        <taxon>Bacteria</taxon>
        <taxon>Bacillati</taxon>
        <taxon>Actinomycetota</taxon>
        <taxon>Actinomycetes</taxon>
        <taxon>Kitasatosporales</taxon>
        <taxon>Streptomycetaceae</taxon>
        <taxon>Streptomyces</taxon>
    </lineage>
</organism>
<dbReference type="EC" id="5.5.1.23"/>
<dbReference type="EMBL" id="L35154">
    <property type="protein sequence ID" value="AAB16937.1"/>
    <property type="molecule type" value="Genomic_DNA"/>
</dbReference>
<dbReference type="SMR" id="Q55215"/>
<dbReference type="KEGG" id="ag:AAB16937"/>
<dbReference type="BioCyc" id="MetaCyc:MONOMER-18182"/>
<dbReference type="BRENDA" id="5.5.1.23">
    <property type="organism ID" value="1284"/>
</dbReference>
<dbReference type="UniPathway" id="UPA00054"/>
<dbReference type="UniPathway" id="UPA01040"/>
<dbReference type="UniPathway" id="UPA01042"/>
<dbReference type="UniPathway" id="UPA01043"/>
<dbReference type="GO" id="GO:0016872">
    <property type="term" value="F:intramolecular lyase activity"/>
    <property type="evidence" value="ECO:0000314"/>
    <property type="project" value="UniProtKB"/>
</dbReference>
<dbReference type="GO" id="GO:0017000">
    <property type="term" value="P:antibiotic biosynthetic process"/>
    <property type="evidence" value="ECO:0000314"/>
    <property type="project" value="UniProtKB"/>
</dbReference>
<dbReference type="GO" id="GO:1901771">
    <property type="term" value="P:daunorubicin biosynthetic process"/>
    <property type="evidence" value="ECO:0000314"/>
    <property type="project" value="UniProtKB"/>
</dbReference>
<dbReference type="GO" id="GO:0044598">
    <property type="term" value="P:doxorubicin metabolic process"/>
    <property type="evidence" value="ECO:0000314"/>
    <property type="project" value="UniProtKB"/>
</dbReference>
<dbReference type="Gene3D" id="3.10.450.50">
    <property type="match status" value="1"/>
</dbReference>
<dbReference type="InterPro" id="IPR009959">
    <property type="entry name" value="Cyclase_SnoaL-like"/>
</dbReference>
<dbReference type="InterPro" id="IPR032710">
    <property type="entry name" value="NTF2-like_dom_sf"/>
</dbReference>
<dbReference type="NCBIfam" id="NF033407">
    <property type="entry name" value="SnoaL_meth_ester"/>
    <property type="match status" value="1"/>
</dbReference>
<dbReference type="PANTHER" id="PTHR38436:SF1">
    <property type="entry name" value="ESTER CYCLASE"/>
    <property type="match status" value="1"/>
</dbReference>
<dbReference type="PANTHER" id="PTHR38436">
    <property type="entry name" value="POLYKETIDE CYCLASE SNOAL-LIKE DOMAIN"/>
    <property type="match status" value="1"/>
</dbReference>
<dbReference type="Pfam" id="PF07366">
    <property type="entry name" value="SnoaL"/>
    <property type="match status" value="1"/>
</dbReference>
<dbReference type="SUPFAM" id="SSF54427">
    <property type="entry name" value="NTF2-like"/>
    <property type="match status" value="1"/>
</dbReference>
<feature type="chain" id="PRO_0000425671" description="Aklanonic acid methyl ester cyclase DauD">
    <location>
        <begin position="1"/>
        <end position="161"/>
    </location>
</feature>
<feature type="region of interest" description="Disordered" evidence="2">
    <location>
        <begin position="137"/>
        <end position="161"/>
    </location>
</feature>
<feature type="binding site" evidence="1">
    <location>
        <position position="106"/>
    </location>
    <ligand>
        <name>substrate</name>
    </ligand>
</feature>